<name>PNP_HELAH</name>
<reference key="1">
    <citation type="journal article" date="2006" name="PLoS Genet.">
        <title>Who ate whom? Adaptive Helicobacter genomic changes that accompanied a host jump from early humans to large felines.</title>
        <authorList>
            <person name="Eppinger M."/>
            <person name="Baar C."/>
            <person name="Linz B."/>
            <person name="Raddatz G."/>
            <person name="Lanz C."/>
            <person name="Keller H."/>
            <person name="Morelli G."/>
            <person name="Gressmann H."/>
            <person name="Achtman M."/>
            <person name="Schuster S.C."/>
        </authorList>
    </citation>
    <scope>NUCLEOTIDE SEQUENCE [LARGE SCALE GENOMIC DNA]</scope>
    <source>
        <strain>Sheeba</strain>
    </source>
</reference>
<protein>
    <recommendedName>
        <fullName evidence="1">Polyribonucleotide nucleotidyltransferase</fullName>
        <ecNumber evidence="1">2.7.7.8</ecNumber>
    </recommendedName>
    <alternativeName>
        <fullName evidence="1">Polynucleotide phosphorylase</fullName>
        <shortName evidence="1">PNPase</shortName>
    </alternativeName>
</protein>
<proteinExistence type="inferred from homology"/>
<organism>
    <name type="scientific">Helicobacter acinonychis (strain Sheeba)</name>
    <dbReference type="NCBI Taxonomy" id="382638"/>
    <lineage>
        <taxon>Bacteria</taxon>
        <taxon>Pseudomonadati</taxon>
        <taxon>Campylobacterota</taxon>
        <taxon>Epsilonproteobacteria</taxon>
        <taxon>Campylobacterales</taxon>
        <taxon>Helicobacteraceae</taxon>
        <taxon>Helicobacter</taxon>
    </lineage>
</organism>
<sequence length="688" mass="77044">MDFITINSINKTEEFALKQVAKQATSSLLYRLGKTIILASVCVERELVSEDFLPLVVQFLEKSYAAGKIPGGFVKREGRAQDFEILTSRLIDRTLRPLFPKDYRYPTQITLMVLSHDIENDLQVSALNAASAALFLAHAAPFKSVSACRIARIDNEFIINPSTSLLNQSSLDLFVSGTKESLNMIEMRSLGQKLNALEEPLMLEALELAQKSLKETCTLYEETFTPHQNALLFKESQGIVFNERLLDLLKNQYFNEIIKGIESSALSERENVFNEIARKISEAHSEFNLEEIELSLEKVKKTEIRRMIIRDKIRPDKRALEEVRPISIESNLLPMAHSSILFTRGQTQSLVVGVLGTDNDAQTHESLEHKAPIKERFMFHYNFPPFCVGEASSIGATSRRELGHGNLAKRALETSIKNKDQVIRLVSEILESNGSSSMASVCAGSLALYASGVEIHDLVAGVAMGMVSEGQDYAILSDISGLEDAEGDMDFKIAGNLEGITAMQMDTKMSGIQLEILYQTLLQAKRVREHILKIMHEAKEKIVINFSHLPTTEIFNVAPDKIIEIIGQGGRVIREIVEKFEVKIDLNKPSGEVKIMGNKERVLKTKEFILNYLHSLDQELEQYAIDEVLEAQVKRIVDFGAFLSLPKGGEGLLRKQHMERCQVALKEGDSIRCRVISFNKGKIALDLA</sequence>
<feature type="chain" id="PRO_0000329676" description="Polyribonucleotide nucleotidyltransferase">
    <location>
        <begin position="1"/>
        <end position="688"/>
    </location>
</feature>
<feature type="domain" description="KH" evidence="1">
    <location>
        <begin position="550"/>
        <end position="609"/>
    </location>
</feature>
<feature type="domain" description="S1 motif" evidence="1">
    <location>
        <begin position="626"/>
        <end position="688"/>
    </location>
</feature>
<feature type="binding site" evidence="1">
    <location>
        <position position="484"/>
    </location>
    <ligand>
        <name>Mg(2+)</name>
        <dbReference type="ChEBI" id="CHEBI:18420"/>
    </ligand>
</feature>
<feature type="binding site" evidence="1">
    <location>
        <position position="490"/>
    </location>
    <ligand>
        <name>Mg(2+)</name>
        <dbReference type="ChEBI" id="CHEBI:18420"/>
    </ligand>
</feature>
<keyword id="KW-0963">Cytoplasm</keyword>
<keyword id="KW-0460">Magnesium</keyword>
<keyword id="KW-0479">Metal-binding</keyword>
<keyword id="KW-0548">Nucleotidyltransferase</keyword>
<keyword id="KW-0694">RNA-binding</keyword>
<keyword id="KW-0808">Transferase</keyword>
<comment type="function">
    <text evidence="1">Involved in mRNA degradation. Catalyzes the phosphorolysis of single-stranded polyribonucleotides processively in the 3'- to 5'-direction.</text>
</comment>
<comment type="catalytic activity">
    <reaction evidence="1">
        <text>RNA(n+1) + phosphate = RNA(n) + a ribonucleoside 5'-diphosphate</text>
        <dbReference type="Rhea" id="RHEA:22096"/>
        <dbReference type="Rhea" id="RHEA-COMP:14527"/>
        <dbReference type="Rhea" id="RHEA-COMP:17342"/>
        <dbReference type="ChEBI" id="CHEBI:43474"/>
        <dbReference type="ChEBI" id="CHEBI:57930"/>
        <dbReference type="ChEBI" id="CHEBI:140395"/>
        <dbReference type="EC" id="2.7.7.8"/>
    </reaction>
</comment>
<comment type="cofactor">
    <cofactor evidence="1">
        <name>Mg(2+)</name>
        <dbReference type="ChEBI" id="CHEBI:18420"/>
    </cofactor>
</comment>
<comment type="subcellular location">
    <subcellularLocation>
        <location evidence="1">Cytoplasm</location>
    </subcellularLocation>
</comment>
<comment type="similarity">
    <text evidence="1">Belongs to the polyribonucleotide nucleotidyltransferase family.</text>
</comment>
<evidence type="ECO:0000255" key="1">
    <source>
        <dbReference type="HAMAP-Rule" id="MF_01595"/>
    </source>
</evidence>
<accession>Q17VM4</accession>
<gene>
    <name evidence="1" type="primary">pnp</name>
    <name type="ordered locus">Hac_1591</name>
</gene>
<dbReference type="EC" id="2.7.7.8" evidence="1"/>
<dbReference type="EMBL" id="AM260522">
    <property type="protein sequence ID" value="CAK00302.1"/>
    <property type="molecule type" value="Genomic_DNA"/>
</dbReference>
<dbReference type="RefSeq" id="WP_011578385.1">
    <property type="nucleotide sequence ID" value="NC_008229.1"/>
</dbReference>
<dbReference type="SMR" id="Q17VM4"/>
<dbReference type="STRING" id="382638.Hac_1591"/>
<dbReference type="GeneID" id="31758849"/>
<dbReference type="KEGG" id="hac:Hac_1591"/>
<dbReference type="eggNOG" id="COG1185">
    <property type="taxonomic scope" value="Bacteria"/>
</dbReference>
<dbReference type="HOGENOM" id="CLU_004217_2_2_7"/>
<dbReference type="OrthoDB" id="9804305at2"/>
<dbReference type="BioCyc" id="HACI382638:HAC_RS06740-MONOMER"/>
<dbReference type="Proteomes" id="UP000000775">
    <property type="component" value="Chromosome"/>
</dbReference>
<dbReference type="GO" id="GO:0005829">
    <property type="term" value="C:cytosol"/>
    <property type="evidence" value="ECO:0007669"/>
    <property type="project" value="TreeGrafter"/>
</dbReference>
<dbReference type="GO" id="GO:0000175">
    <property type="term" value="F:3'-5'-RNA exonuclease activity"/>
    <property type="evidence" value="ECO:0007669"/>
    <property type="project" value="TreeGrafter"/>
</dbReference>
<dbReference type="GO" id="GO:0000287">
    <property type="term" value="F:magnesium ion binding"/>
    <property type="evidence" value="ECO:0007669"/>
    <property type="project" value="UniProtKB-UniRule"/>
</dbReference>
<dbReference type="GO" id="GO:0004654">
    <property type="term" value="F:polyribonucleotide nucleotidyltransferase activity"/>
    <property type="evidence" value="ECO:0007669"/>
    <property type="project" value="UniProtKB-UniRule"/>
</dbReference>
<dbReference type="GO" id="GO:0003723">
    <property type="term" value="F:RNA binding"/>
    <property type="evidence" value="ECO:0007669"/>
    <property type="project" value="UniProtKB-UniRule"/>
</dbReference>
<dbReference type="GO" id="GO:0006402">
    <property type="term" value="P:mRNA catabolic process"/>
    <property type="evidence" value="ECO:0007669"/>
    <property type="project" value="UniProtKB-UniRule"/>
</dbReference>
<dbReference type="GO" id="GO:0006396">
    <property type="term" value="P:RNA processing"/>
    <property type="evidence" value="ECO:0007669"/>
    <property type="project" value="InterPro"/>
</dbReference>
<dbReference type="CDD" id="cd02393">
    <property type="entry name" value="KH-I_PNPase"/>
    <property type="match status" value="1"/>
</dbReference>
<dbReference type="CDD" id="cd11364">
    <property type="entry name" value="RNase_PH_PNPase_2"/>
    <property type="match status" value="1"/>
</dbReference>
<dbReference type="FunFam" id="3.30.1370.10:FF:000001">
    <property type="entry name" value="Polyribonucleotide nucleotidyltransferase"/>
    <property type="match status" value="1"/>
</dbReference>
<dbReference type="FunFam" id="3.30.230.70:FF:000026">
    <property type="entry name" value="Polyribonucleotide nucleotidyltransferase"/>
    <property type="match status" value="1"/>
</dbReference>
<dbReference type="FunFam" id="3.30.230.70:FF:000029">
    <property type="entry name" value="Polyribonucleotide nucleotidyltransferase"/>
    <property type="match status" value="1"/>
</dbReference>
<dbReference type="Gene3D" id="3.30.230.70">
    <property type="entry name" value="GHMP Kinase, N-terminal domain"/>
    <property type="match status" value="2"/>
</dbReference>
<dbReference type="Gene3D" id="3.30.1370.10">
    <property type="entry name" value="K Homology domain, type 1"/>
    <property type="match status" value="1"/>
</dbReference>
<dbReference type="Gene3D" id="2.40.50.140">
    <property type="entry name" value="Nucleic acid-binding proteins"/>
    <property type="match status" value="1"/>
</dbReference>
<dbReference type="HAMAP" id="MF_01595">
    <property type="entry name" value="PNPase"/>
    <property type="match status" value="1"/>
</dbReference>
<dbReference type="InterPro" id="IPR001247">
    <property type="entry name" value="ExoRNase_PH_dom1"/>
</dbReference>
<dbReference type="InterPro" id="IPR015847">
    <property type="entry name" value="ExoRNase_PH_dom2"/>
</dbReference>
<dbReference type="InterPro" id="IPR036345">
    <property type="entry name" value="ExoRNase_PH_dom2_sf"/>
</dbReference>
<dbReference type="InterPro" id="IPR004087">
    <property type="entry name" value="KH_dom"/>
</dbReference>
<dbReference type="InterPro" id="IPR004088">
    <property type="entry name" value="KH_dom_type_1"/>
</dbReference>
<dbReference type="InterPro" id="IPR036612">
    <property type="entry name" value="KH_dom_type_1_sf"/>
</dbReference>
<dbReference type="InterPro" id="IPR012340">
    <property type="entry name" value="NA-bd_OB-fold"/>
</dbReference>
<dbReference type="InterPro" id="IPR012162">
    <property type="entry name" value="PNPase"/>
</dbReference>
<dbReference type="InterPro" id="IPR027408">
    <property type="entry name" value="PNPase/RNase_PH_dom_sf"/>
</dbReference>
<dbReference type="InterPro" id="IPR036456">
    <property type="entry name" value="PNPase_PH_RNA-bd_sf"/>
</dbReference>
<dbReference type="InterPro" id="IPR020568">
    <property type="entry name" value="Ribosomal_Su5_D2-typ_SF"/>
</dbReference>
<dbReference type="InterPro" id="IPR003029">
    <property type="entry name" value="S1_domain"/>
</dbReference>
<dbReference type="NCBIfam" id="TIGR03591">
    <property type="entry name" value="polynuc_phos"/>
    <property type="match status" value="1"/>
</dbReference>
<dbReference type="NCBIfam" id="NF008805">
    <property type="entry name" value="PRK11824.1"/>
    <property type="match status" value="1"/>
</dbReference>
<dbReference type="PANTHER" id="PTHR11252">
    <property type="entry name" value="POLYRIBONUCLEOTIDE NUCLEOTIDYLTRANSFERASE"/>
    <property type="match status" value="1"/>
</dbReference>
<dbReference type="PANTHER" id="PTHR11252:SF0">
    <property type="entry name" value="POLYRIBONUCLEOTIDE NUCLEOTIDYLTRANSFERASE 1, MITOCHONDRIAL"/>
    <property type="match status" value="1"/>
</dbReference>
<dbReference type="Pfam" id="PF00013">
    <property type="entry name" value="KH_1"/>
    <property type="match status" value="1"/>
</dbReference>
<dbReference type="Pfam" id="PF01138">
    <property type="entry name" value="RNase_PH"/>
    <property type="match status" value="2"/>
</dbReference>
<dbReference type="Pfam" id="PF03725">
    <property type="entry name" value="RNase_PH_C"/>
    <property type="match status" value="2"/>
</dbReference>
<dbReference type="Pfam" id="PF00575">
    <property type="entry name" value="S1"/>
    <property type="match status" value="1"/>
</dbReference>
<dbReference type="PIRSF" id="PIRSF005499">
    <property type="entry name" value="PNPase"/>
    <property type="match status" value="1"/>
</dbReference>
<dbReference type="SMART" id="SM00322">
    <property type="entry name" value="KH"/>
    <property type="match status" value="1"/>
</dbReference>
<dbReference type="SMART" id="SM00316">
    <property type="entry name" value="S1"/>
    <property type="match status" value="1"/>
</dbReference>
<dbReference type="SUPFAM" id="SSF54791">
    <property type="entry name" value="Eukaryotic type KH-domain (KH-domain type I)"/>
    <property type="match status" value="1"/>
</dbReference>
<dbReference type="SUPFAM" id="SSF50249">
    <property type="entry name" value="Nucleic acid-binding proteins"/>
    <property type="match status" value="1"/>
</dbReference>
<dbReference type="SUPFAM" id="SSF46915">
    <property type="entry name" value="Polynucleotide phosphorylase/guanosine pentaphosphate synthase (PNPase/GPSI), domain 3"/>
    <property type="match status" value="1"/>
</dbReference>
<dbReference type="SUPFAM" id="SSF55666">
    <property type="entry name" value="Ribonuclease PH domain 2-like"/>
    <property type="match status" value="2"/>
</dbReference>
<dbReference type="SUPFAM" id="SSF54211">
    <property type="entry name" value="Ribosomal protein S5 domain 2-like"/>
    <property type="match status" value="2"/>
</dbReference>
<dbReference type="PROSITE" id="PS50084">
    <property type="entry name" value="KH_TYPE_1"/>
    <property type="match status" value="1"/>
</dbReference>
<dbReference type="PROSITE" id="PS50126">
    <property type="entry name" value="S1"/>
    <property type="match status" value="1"/>
</dbReference>